<proteinExistence type="inferred from homology"/>
<keyword id="KW-0028">Amino-acid biosynthesis</keyword>
<keyword id="KW-0067">ATP-binding</keyword>
<keyword id="KW-0963">Cytoplasm</keyword>
<keyword id="KW-0328">Glycosyltransferase</keyword>
<keyword id="KW-0368">Histidine biosynthesis</keyword>
<keyword id="KW-0547">Nucleotide-binding</keyword>
<keyword id="KW-1185">Reference proteome</keyword>
<keyword id="KW-0808">Transferase</keyword>
<evidence type="ECO:0000255" key="1">
    <source>
        <dbReference type="HAMAP-Rule" id="MF_01018"/>
    </source>
</evidence>
<protein>
    <recommendedName>
        <fullName evidence="1">ATP phosphoribosyltransferase</fullName>
        <shortName evidence="1">ATP-PRT</shortName>
        <shortName evidence="1">ATP-PRTase</shortName>
        <ecNumber evidence="1">2.4.2.17</ecNumber>
    </recommendedName>
</protein>
<organism>
    <name type="scientific">Synechococcus sp. (strain CC9902)</name>
    <dbReference type="NCBI Taxonomy" id="316279"/>
    <lineage>
        <taxon>Bacteria</taxon>
        <taxon>Bacillati</taxon>
        <taxon>Cyanobacteriota</taxon>
        <taxon>Cyanophyceae</taxon>
        <taxon>Synechococcales</taxon>
        <taxon>Synechococcaceae</taxon>
        <taxon>Synechococcus</taxon>
    </lineage>
</organism>
<feature type="chain" id="PRO_1000063316" description="ATP phosphoribosyltransferase">
    <location>
        <begin position="1"/>
        <end position="216"/>
    </location>
</feature>
<accession>Q3AYI1</accession>
<comment type="function">
    <text evidence="1">Catalyzes the condensation of ATP and 5-phosphoribose 1-diphosphate to form N'-(5'-phosphoribosyl)-ATP (PR-ATP). Has a crucial role in the pathway because the rate of histidine biosynthesis seems to be controlled primarily by regulation of HisG enzymatic activity.</text>
</comment>
<comment type="catalytic activity">
    <reaction evidence="1">
        <text>1-(5-phospho-beta-D-ribosyl)-ATP + diphosphate = 5-phospho-alpha-D-ribose 1-diphosphate + ATP</text>
        <dbReference type="Rhea" id="RHEA:18473"/>
        <dbReference type="ChEBI" id="CHEBI:30616"/>
        <dbReference type="ChEBI" id="CHEBI:33019"/>
        <dbReference type="ChEBI" id="CHEBI:58017"/>
        <dbReference type="ChEBI" id="CHEBI:73183"/>
        <dbReference type="EC" id="2.4.2.17"/>
    </reaction>
</comment>
<comment type="pathway">
    <text evidence="1">Amino-acid biosynthesis; L-histidine biosynthesis; L-histidine from 5-phospho-alpha-D-ribose 1-diphosphate: step 1/9.</text>
</comment>
<comment type="subunit">
    <text evidence="1">Heteromultimer composed of HisG and HisZ subunits.</text>
</comment>
<comment type="subcellular location">
    <subcellularLocation>
        <location evidence="1">Cytoplasm</location>
    </subcellularLocation>
</comment>
<comment type="domain">
    <text>Lacks the C-terminal regulatory region which is replaced by HisZ.</text>
</comment>
<comment type="similarity">
    <text evidence="1">Belongs to the ATP phosphoribosyltransferase family. Short subfamily.</text>
</comment>
<name>HIS1_SYNS9</name>
<sequence>MITVALAKGALLKDSVARFAAAGLDFSAVLDKDNRQLMVPTPCGRARALLVRNGDVPTYVSYGQAQLGVVGYDVLKEHQLPVAQLVDLGFGGCRMSVAVKASSGYQRALDLPAHCRVASKFTHCAREYFDSLDLPVELVHLNGSVELGPITGMSEAIVDLVATGRTLRDNGLVEIEELFRSSARLVGHPLSMRLDDGALTEIVTAIRAVEPSKGEA</sequence>
<gene>
    <name evidence="1" type="primary">hisG</name>
    <name type="ordered locus">Syncc9902_0880</name>
</gene>
<dbReference type="EC" id="2.4.2.17" evidence="1"/>
<dbReference type="EMBL" id="CP000097">
    <property type="protein sequence ID" value="ABB25846.1"/>
    <property type="molecule type" value="Genomic_DNA"/>
</dbReference>
<dbReference type="RefSeq" id="WP_011359683.1">
    <property type="nucleotide sequence ID" value="NC_007513.1"/>
</dbReference>
<dbReference type="SMR" id="Q3AYI1"/>
<dbReference type="STRING" id="316279.Syncc9902_0880"/>
<dbReference type="KEGG" id="sye:Syncc9902_0880"/>
<dbReference type="eggNOG" id="COG0040">
    <property type="taxonomic scope" value="Bacteria"/>
</dbReference>
<dbReference type="HOGENOM" id="CLU_038115_2_0_3"/>
<dbReference type="OrthoDB" id="9801867at2"/>
<dbReference type="UniPathway" id="UPA00031">
    <property type="reaction ID" value="UER00006"/>
</dbReference>
<dbReference type="Proteomes" id="UP000002712">
    <property type="component" value="Chromosome"/>
</dbReference>
<dbReference type="GO" id="GO:0005737">
    <property type="term" value="C:cytoplasm"/>
    <property type="evidence" value="ECO:0007669"/>
    <property type="project" value="UniProtKB-SubCell"/>
</dbReference>
<dbReference type="GO" id="GO:0005524">
    <property type="term" value="F:ATP binding"/>
    <property type="evidence" value="ECO:0007669"/>
    <property type="project" value="UniProtKB-KW"/>
</dbReference>
<dbReference type="GO" id="GO:0003879">
    <property type="term" value="F:ATP phosphoribosyltransferase activity"/>
    <property type="evidence" value="ECO:0007669"/>
    <property type="project" value="UniProtKB-UniRule"/>
</dbReference>
<dbReference type="GO" id="GO:0000105">
    <property type="term" value="P:L-histidine biosynthetic process"/>
    <property type="evidence" value="ECO:0007669"/>
    <property type="project" value="UniProtKB-UniRule"/>
</dbReference>
<dbReference type="CDD" id="cd13595">
    <property type="entry name" value="PBP2_HisGs"/>
    <property type="match status" value="1"/>
</dbReference>
<dbReference type="FunFam" id="3.40.190.10:FF:000008">
    <property type="entry name" value="ATP phosphoribosyltransferase"/>
    <property type="match status" value="1"/>
</dbReference>
<dbReference type="Gene3D" id="3.40.190.10">
    <property type="entry name" value="Periplasmic binding protein-like II"/>
    <property type="match status" value="2"/>
</dbReference>
<dbReference type="HAMAP" id="MF_01018">
    <property type="entry name" value="HisG_Short"/>
    <property type="match status" value="1"/>
</dbReference>
<dbReference type="InterPro" id="IPR013820">
    <property type="entry name" value="ATP_PRibTrfase_cat"/>
</dbReference>
<dbReference type="InterPro" id="IPR018198">
    <property type="entry name" value="ATP_PRibTrfase_CS"/>
</dbReference>
<dbReference type="InterPro" id="IPR001348">
    <property type="entry name" value="ATP_PRibTrfase_HisG"/>
</dbReference>
<dbReference type="InterPro" id="IPR024893">
    <property type="entry name" value="ATP_PRibTrfase_HisG_short"/>
</dbReference>
<dbReference type="NCBIfam" id="TIGR00070">
    <property type="entry name" value="hisG"/>
    <property type="match status" value="1"/>
</dbReference>
<dbReference type="PANTHER" id="PTHR21403:SF8">
    <property type="entry name" value="ATP PHOSPHORIBOSYLTRANSFERASE"/>
    <property type="match status" value="1"/>
</dbReference>
<dbReference type="PANTHER" id="PTHR21403">
    <property type="entry name" value="ATP PHOSPHORIBOSYLTRANSFERASE ATP-PRTASE"/>
    <property type="match status" value="1"/>
</dbReference>
<dbReference type="Pfam" id="PF01634">
    <property type="entry name" value="HisG"/>
    <property type="match status" value="1"/>
</dbReference>
<dbReference type="SUPFAM" id="SSF53850">
    <property type="entry name" value="Periplasmic binding protein-like II"/>
    <property type="match status" value="1"/>
</dbReference>
<dbReference type="PROSITE" id="PS01316">
    <property type="entry name" value="ATP_P_PHORIBOSYLTR"/>
    <property type="match status" value="1"/>
</dbReference>
<reference key="1">
    <citation type="submission" date="2005-08" db="EMBL/GenBank/DDBJ databases">
        <title>Complete sequence of Synechococcus sp. CC9902.</title>
        <authorList>
            <person name="Copeland A."/>
            <person name="Lucas S."/>
            <person name="Lapidus A."/>
            <person name="Barry K."/>
            <person name="Detter J.C."/>
            <person name="Glavina T."/>
            <person name="Hammon N."/>
            <person name="Israni S."/>
            <person name="Pitluck S."/>
            <person name="Martinez M."/>
            <person name="Schmutz J."/>
            <person name="Larimer F."/>
            <person name="Land M."/>
            <person name="Kyrpides N."/>
            <person name="Ivanova N."/>
            <person name="Richardson P."/>
        </authorList>
    </citation>
    <scope>NUCLEOTIDE SEQUENCE [LARGE SCALE GENOMIC DNA]</scope>
    <source>
        <strain>CC9902</strain>
    </source>
</reference>